<feature type="chain" id="PRO_0000134292" description="Small ribosomal subunit protein uS2c">
    <location>
        <begin position="1"/>
        <end position="11" status="greater than"/>
    </location>
</feature>
<feature type="non-terminal residue">
    <location>
        <position position="11"/>
    </location>
</feature>
<sequence length="11" mass="1497">MTRRYWNIDLE</sequence>
<gene>
    <name type="primary">rps2</name>
</gene>
<evidence type="ECO:0000305" key="1"/>
<accession>P42341</accession>
<organism>
    <name type="scientific">Conopholis americana</name>
    <name type="common">Squawroot</name>
    <name type="synonym">Orobanche americana</name>
    <dbReference type="NCBI Taxonomy" id="4179"/>
    <lineage>
        <taxon>Eukaryota</taxon>
        <taxon>Viridiplantae</taxon>
        <taxon>Streptophyta</taxon>
        <taxon>Embryophyta</taxon>
        <taxon>Tracheophyta</taxon>
        <taxon>Spermatophyta</taxon>
        <taxon>Magnoliopsida</taxon>
        <taxon>eudicotyledons</taxon>
        <taxon>Gunneridae</taxon>
        <taxon>Pentapetalae</taxon>
        <taxon>asterids</taxon>
        <taxon>lamiids</taxon>
        <taxon>Lamiales</taxon>
        <taxon>Orobanchaceae</taxon>
        <taxon>Orobancheae</taxon>
        <taxon>Conopholis</taxon>
    </lineage>
</organism>
<proteinExistence type="inferred from homology"/>
<reference key="1">
    <citation type="journal article" date="1991" name="Curr. Genet.">
        <title>Lack of a functional plastid tRNA(Cys) gene is associated with loss of photosynthesis in a lineage of parasitic plants.</title>
        <authorList>
            <person name="Taylor G."/>
            <person name="Wolfe K.H."/>
            <person name="Morden C.W."/>
            <person name="Depamphilis C.W."/>
            <person name="Palmer J.D."/>
        </authorList>
    </citation>
    <scope>NUCLEOTIDE SEQUENCE [GENOMIC DNA]</scope>
</reference>
<keyword id="KW-0934">Plastid</keyword>
<keyword id="KW-0687">Ribonucleoprotein</keyword>
<keyword id="KW-0689">Ribosomal protein</keyword>
<geneLocation type="non-photosynthetic plastid"/>
<comment type="subcellular location">
    <subcellularLocation>
        <location>Plastid</location>
    </subcellularLocation>
</comment>
<comment type="similarity">
    <text evidence="1">Belongs to the universal ribosomal protein uS2 family.</text>
</comment>
<name>RR2_CONAM</name>
<dbReference type="EMBL" id="X64567">
    <property type="protein sequence ID" value="CAA45868.1"/>
    <property type="molecule type" value="Genomic_DNA"/>
</dbReference>
<dbReference type="PIR" id="S32575">
    <property type="entry name" value="S32575"/>
</dbReference>
<dbReference type="GO" id="GO:0009536">
    <property type="term" value="C:plastid"/>
    <property type="evidence" value="ECO:0007669"/>
    <property type="project" value="UniProtKB-SubCell"/>
</dbReference>
<dbReference type="GO" id="GO:1990904">
    <property type="term" value="C:ribonucleoprotein complex"/>
    <property type="evidence" value="ECO:0007669"/>
    <property type="project" value="UniProtKB-KW"/>
</dbReference>
<dbReference type="GO" id="GO:0005840">
    <property type="term" value="C:ribosome"/>
    <property type="evidence" value="ECO:0007669"/>
    <property type="project" value="UniProtKB-KW"/>
</dbReference>
<protein>
    <recommendedName>
        <fullName evidence="1">Small ribosomal subunit protein uS2c</fullName>
    </recommendedName>
    <alternativeName>
        <fullName>Plastid 30S ribosomal protein S2</fullName>
    </alternativeName>
</protein>